<keyword id="KW-0963">Cytoplasm</keyword>
<keyword id="KW-0570">Pentose shunt</keyword>
<keyword id="KW-1185">Reference proteome</keyword>
<keyword id="KW-0704">Schiff base</keyword>
<keyword id="KW-0808">Transferase</keyword>
<protein>
    <recommendedName>
        <fullName>Probable transaldolase</fullName>
        <ecNumber>2.2.1.2</ecNumber>
    </recommendedName>
</protein>
<accession>Q9K6E4</accession>
<evidence type="ECO:0000250" key="1"/>
<evidence type="ECO:0000305" key="2"/>
<name>TAL_HALH5</name>
<feature type="chain" id="PRO_0000173657" description="Probable transaldolase">
    <location>
        <begin position="1"/>
        <end position="212"/>
    </location>
</feature>
<feature type="active site" description="Schiff-base intermediate with substrate" evidence="1">
    <location>
        <position position="83"/>
    </location>
</feature>
<reference key="1">
    <citation type="journal article" date="2000" name="Nucleic Acids Res.">
        <title>Complete genome sequence of the alkaliphilic bacterium Bacillus halodurans and genomic sequence comparison with Bacillus subtilis.</title>
        <authorList>
            <person name="Takami H."/>
            <person name="Nakasone K."/>
            <person name="Takaki Y."/>
            <person name="Maeno G."/>
            <person name="Sasaki R."/>
            <person name="Masui N."/>
            <person name="Fuji F."/>
            <person name="Hirama C."/>
            <person name="Nakamura Y."/>
            <person name="Ogasawara N."/>
            <person name="Kuhara S."/>
            <person name="Horikoshi K."/>
        </authorList>
    </citation>
    <scope>NUCLEOTIDE SEQUENCE [LARGE SCALE GENOMIC DNA]</scope>
    <source>
        <strain>ATCC BAA-125 / DSM 18197 / FERM 7344 / JCM 9153 / C-125</strain>
    </source>
</reference>
<proteinExistence type="inferred from homology"/>
<comment type="function">
    <text evidence="1">Transaldolase is important for the balance of metabolites in the pentose-phosphate pathway.</text>
</comment>
<comment type="catalytic activity">
    <reaction>
        <text>D-sedoheptulose 7-phosphate + D-glyceraldehyde 3-phosphate = D-erythrose 4-phosphate + beta-D-fructose 6-phosphate</text>
        <dbReference type="Rhea" id="RHEA:17053"/>
        <dbReference type="ChEBI" id="CHEBI:16897"/>
        <dbReference type="ChEBI" id="CHEBI:57483"/>
        <dbReference type="ChEBI" id="CHEBI:57634"/>
        <dbReference type="ChEBI" id="CHEBI:59776"/>
        <dbReference type="EC" id="2.2.1.2"/>
    </reaction>
</comment>
<comment type="pathway">
    <text>Carbohydrate degradation; pentose phosphate pathway; D-glyceraldehyde 3-phosphate and beta-D-fructose 6-phosphate from D-ribose 5-phosphate and D-xylulose 5-phosphate (non-oxidative stage): step 2/3.</text>
</comment>
<comment type="subcellular location">
    <subcellularLocation>
        <location evidence="1">Cytoplasm</location>
    </subcellularLocation>
</comment>
<comment type="similarity">
    <text evidence="2">Belongs to the transaldolase family. Type 3B subfamily.</text>
</comment>
<organism>
    <name type="scientific">Halalkalibacterium halodurans (strain ATCC BAA-125 / DSM 18197 / FERM 7344 / JCM 9153 / C-125)</name>
    <name type="common">Bacillus halodurans</name>
    <dbReference type="NCBI Taxonomy" id="272558"/>
    <lineage>
        <taxon>Bacteria</taxon>
        <taxon>Bacillati</taxon>
        <taxon>Bacillota</taxon>
        <taxon>Bacilli</taxon>
        <taxon>Bacillales</taxon>
        <taxon>Bacillaceae</taxon>
        <taxon>Halalkalibacterium (ex Joshi et al. 2022)</taxon>
    </lineage>
</organism>
<dbReference type="EC" id="2.2.1.2"/>
<dbReference type="EMBL" id="BA000004">
    <property type="protein sequence ID" value="BAB07504.1"/>
    <property type="molecule type" value="Genomic_DNA"/>
</dbReference>
<dbReference type="PIR" id="A84123">
    <property type="entry name" value="A84123"/>
</dbReference>
<dbReference type="RefSeq" id="WP_010899910.1">
    <property type="nucleotide sequence ID" value="NC_002570.2"/>
</dbReference>
<dbReference type="SMR" id="Q9K6E4"/>
<dbReference type="STRING" id="272558.gene:10729698"/>
<dbReference type="KEGG" id="bha:BH3785"/>
<dbReference type="eggNOG" id="COG0176">
    <property type="taxonomic scope" value="Bacteria"/>
</dbReference>
<dbReference type="HOGENOM" id="CLU_079764_0_0_9"/>
<dbReference type="OrthoDB" id="9807051at2"/>
<dbReference type="UniPathway" id="UPA00115">
    <property type="reaction ID" value="UER00414"/>
</dbReference>
<dbReference type="Proteomes" id="UP000001258">
    <property type="component" value="Chromosome"/>
</dbReference>
<dbReference type="GO" id="GO:0005737">
    <property type="term" value="C:cytoplasm"/>
    <property type="evidence" value="ECO:0007669"/>
    <property type="project" value="UniProtKB-SubCell"/>
</dbReference>
<dbReference type="GO" id="GO:0016832">
    <property type="term" value="F:aldehyde-lyase activity"/>
    <property type="evidence" value="ECO:0007669"/>
    <property type="project" value="InterPro"/>
</dbReference>
<dbReference type="GO" id="GO:0004801">
    <property type="term" value="F:transaldolase activity"/>
    <property type="evidence" value="ECO:0007669"/>
    <property type="project" value="UniProtKB-UniRule"/>
</dbReference>
<dbReference type="GO" id="GO:0005975">
    <property type="term" value="P:carbohydrate metabolic process"/>
    <property type="evidence" value="ECO:0007669"/>
    <property type="project" value="InterPro"/>
</dbReference>
<dbReference type="GO" id="GO:0006098">
    <property type="term" value="P:pentose-phosphate shunt"/>
    <property type="evidence" value="ECO:0007669"/>
    <property type="project" value="UniProtKB-UniRule"/>
</dbReference>
<dbReference type="CDD" id="cd00956">
    <property type="entry name" value="Transaldolase_FSA"/>
    <property type="match status" value="1"/>
</dbReference>
<dbReference type="FunFam" id="3.20.20.70:FF:000018">
    <property type="entry name" value="Probable transaldolase"/>
    <property type="match status" value="1"/>
</dbReference>
<dbReference type="Gene3D" id="3.20.20.70">
    <property type="entry name" value="Aldolase class I"/>
    <property type="match status" value="1"/>
</dbReference>
<dbReference type="HAMAP" id="MF_00494">
    <property type="entry name" value="Transaldolase_3b"/>
    <property type="match status" value="1"/>
</dbReference>
<dbReference type="InterPro" id="IPR013785">
    <property type="entry name" value="Aldolase_TIM"/>
</dbReference>
<dbReference type="InterPro" id="IPR001585">
    <property type="entry name" value="TAL/FSA"/>
</dbReference>
<dbReference type="InterPro" id="IPR022999">
    <property type="entry name" value="Transaldolase_3B"/>
</dbReference>
<dbReference type="InterPro" id="IPR004731">
    <property type="entry name" value="Transaldolase_3B/F6P_aldolase"/>
</dbReference>
<dbReference type="InterPro" id="IPR018225">
    <property type="entry name" value="Transaldolase_AS"/>
</dbReference>
<dbReference type="InterPro" id="IPR033919">
    <property type="entry name" value="TSA/FSA_arc/bac"/>
</dbReference>
<dbReference type="NCBIfam" id="TIGR00875">
    <property type="entry name" value="fsa_talC_mipB"/>
    <property type="match status" value="1"/>
</dbReference>
<dbReference type="PANTHER" id="PTHR10683">
    <property type="entry name" value="TRANSALDOLASE"/>
    <property type="match status" value="1"/>
</dbReference>
<dbReference type="PANTHER" id="PTHR10683:SF36">
    <property type="entry name" value="TRANSALDOLASE"/>
    <property type="match status" value="1"/>
</dbReference>
<dbReference type="Pfam" id="PF00923">
    <property type="entry name" value="TAL_FSA"/>
    <property type="match status" value="1"/>
</dbReference>
<dbReference type="SUPFAM" id="SSF51569">
    <property type="entry name" value="Aldolase"/>
    <property type="match status" value="1"/>
</dbReference>
<dbReference type="PROSITE" id="PS01054">
    <property type="entry name" value="TRANSALDOLASE_1"/>
    <property type="match status" value="1"/>
</dbReference>
<dbReference type="PROSITE" id="PS00958">
    <property type="entry name" value="TRANSALDOLASE_2"/>
    <property type="match status" value="1"/>
</dbReference>
<gene>
    <name type="primary">tal</name>
    <name type="ordered locus">BH3785</name>
</gene>
<sequence>MKFFIDTANINEIREANDLGILAGVTTNPSLVAKEGVDFHERLREITSLVKGSVSAEVVALDAEGMIKEGKELAAIAPNITVKVPMTTEGLKAVHAFHQEGITTNVTLVFSAVQALLAARAGATYVSPFLGRLDDIGHDGLDLISQIAEIFHVHDLDIQIIAASIRHPQHVTEAALRGAHIATIPFKVISQLSKHPLTDKGIEQFLKDWNNR</sequence>